<dbReference type="EC" id="2.3.1.129" evidence="1"/>
<dbReference type="EMBL" id="CP000526">
    <property type="protein sequence ID" value="ABM50606.1"/>
    <property type="molecule type" value="Genomic_DNA"/>
</dbReference>
<dbReference type="RefSeq" id="WP_004193051.1">
    <property type="nucleotide sequence ID" value="NC_008785.1"/>
</dbReference>
<dbReference type="SMR" id="A1V556"/>
<dbReference type="GeneID" id="93060688"/>
<dbReference type="KEGG" id="bmv:BMASAVP1_A2043"/>
<dbReference type="HOGENOM" id="CLU_061249_0_0_4"/>
<dbReference type="UniPathway" id="UPA00359">
    <property type="reaction ID" value="UER00477"/>
</dbReference>
<dbReference type="GO" id="GO:0005737">
    <property type="term" value="C:cytoplasm"/>
    <property type="evidence" value="ECO:0007669"/>
    <property type="project" value="UniProtKB-SubCell"/>
</dbReference>
<dbReference type="GO" id="GO:0016020">
    <property type="term" value="C:membrane"/>
    <property type="evidence" value="ECO:0007669"/>
    <property type="project" value="GOC"/>
</dbReference>
<dbReference type="GO" id="GO:0008780">
    <property type="term" value="F:acyl-[acyl-carrier-protein]-UDP-N-acetylglucosamine O-acyltransferase activity"/>
    <property type="evidence" value="ECO:0007669"/>
    <property type="project" value="UniProtKB-UniRule"/>
</dbReference>
<dbReference type="GO" id="GO:0009245">
    <property type="term" value="P:lipid A biosynthetic process"/>
    <property type="evidence" value="ECO:0007669"/>
    <property type="project" value="UniProtKB-UniRule"/>
</dbReference>
<dbReference type="CDD" id="cd03351">
    <property type="entry name" value="LbH_UDP-GlcNAc_AT"/>
    <property type="match status" value="1"/>
</dbReference>
<dbReference type="Gene3D" id="2.160.10.10">
    <property type="entry name" value="Hexapeptide repeat proteins"/>
    <property type="match status" value="1"/>
</dbReference>
<dbReference type="Gene3D" id="1.20.1180.10">
    <property type="entry name" value="Udp N-acetylglucosamine O-acyltransferase, C-terminal domain"/>
    <property type="match status" value="1"/>
</dbReference>
<dbReference type="HAMAP" id="MF_00387">
    <property type="entry name" value="LpxA"/>
    <property type="match status" value="1"/>
</dbReference>
<dbReference type="InterPro" id="IPR029098">
    <property type="entry name" value="Acetyltransf_C"/>
</dbReference>
<dbReference type="InterPro" id="IPR037157">
    <property type="entry name" value="Acetyltransf_C_sf"/>
</dbReference>
<dbReference type="InterPro" id="IPR001451">
    <property type="entry name" value="Hexapep"/>
</dbReference>
<dbReference type="InterPro" id="IPR010137">
    <property type="entry name" value="Lipid_A_LpxA"/>
</dbReference>
<dbReference type="InterPro" id="IPR011004">
    <property type="entry name" value="Trimer_LpxA-like_sf"/>
</dbReference>
<dbReference type="NCBIfam" id="TIGR01852">
    <property type="entry name" value="lipid_A_lpxA"/>
    <property type="match status" value="1"/>
</dbReference>
<dbReference type="NCBIfam" id="NF003657">
    <property type="entry name" value="PRK05289.1"/>
    <property type="match status" value="1"/>
</dbReference>
<dbReference type="PANTHER" id="PTHR43480">
    <property type="entry name" value="ACYL-[ACYL-CARRIER-PROTEIN]--UDP-N-ACETYLGLUCOSAMINE O-ACYLTRANSFERASE"/>
    <property type="match status" value="1"/>
</dbReference>
<dbReference type="PANTHER" id="PTHR43480:SF1">
    <property type="entry name" value="ACYL-[ACYL-CARRIER-PROTEIN]--UDP-N-ACETYLGLUCOSAMINE O-ACYLTRANSFERASE, MITOCHONDRIAL-RELATED"/>
    <property type="match status" value="1"/>
</dbReference>
<dbReference type="Pfam" id="PF13720">
    <property type="entry name" value="Acetyltransf_11"/>
    <property type="match status" value="1"/>
</dbReference>
<dbReference type="Pfam" id="PF00132">
    <property type="entry name" value="Hexapep"/>
    <property type="match status" value="2"/>
</dbReference>
<dbReference type="PIRSF" id="PIRSF000456">
    <property type="entry name" value="UDP-GlcNAc_acltr"/>
    <property type="match status" value="1"/>
</dbReference>
<dbReference type="SUPFAM" id="SSF51161">
    <property type="entry name" value="Trimeric LpxA-like enzymes"/>
    <property type="match status" value="1"/>
</dbReference>
<dbReference type="PROSITE" id="PS00101">
    <property type="entry name" value="HEXAPEP_TRANSFERASES"/>
    <property type="match status" value="1"/>
</dbReference>
<proteinExistence type="inferred from homology"/>
<comment type="function">
    <text evidence="1">Involved in the biosynthesis of lipid A, a phosphorylated glycolipid that anchors the lipopolysaccharide to the outer membrane of the cell.</text>
</comment>
<comment type="catalytic activity">
    <reaction evidence="1">
        <text>a (3R)-hydroxyacyl-[ACP] + UDP-N-acetyl-alpha-D-glucosamine = a UDP-3-O-[(3R)-3-hydroxyacyl]-N-acetyl-alpha-D-glucosamine + holo-[ACP]</text>
        <dbReference type="Rhea" id="RHEA:67812"/>
        <dbReference type="Rhea" id="RHEA-COMP:9685"/>
        <dbReference type="Rhea" id="RHEA-COMP:9945"/>
        <dbReference type="ChEBI" id="CHEBI:57705"/>
        <dbReference type="ChEBI" id="CHEBI:64479"/>
        <dbReference type="ChEBI" id="CHEBI:78827"/>
        <dbReference type="ChEBI" id="CHEBI:173225"/>
        <dbReference type="EC" id="2.3.1.129"/>
    </reaction>
</comment>
<comment type="pathway">
    <text evidence="1">Glycolipid biosynthesis; lipid IV(A) biosynthesis; lipid IV(A) from (3R)-3-hydroxytetradecanoyl-[acyl-carrier-protein] and UDP-N-acetyl-alpha-D-glucosamine: step 1/6.</text>
</comment>
<comment type="subunit">
    <text evidence="1">Homotrimer.</text>
</comment>
<comment type="subcellular location">
    <subcellularLocation>
        <location evidence="1">Cytoplasm</location>
    </subcellularLocation>
</comment>
<comment type="similarity">
    <text evidence="1">Belongs to the transferase hexapeptide repeat family. LpxA subfamily.</text>
</comment>
<gene>
    <name evidence="1" type="primary">lpxA</name>
    <name type="ordered locus">BMASAVP1_A2043</name>
</gene>
<reference key="1">
    <citation type="journal article" date="2010" name="Genome Biol. Evol.">
        <title>Continuing evolution of Burkholderia mallei through genome reduction and large-scale rearrangements.</title>
        <authorList>
            <person name="Losada L."/>
            <person name="Ronning C.M."/>
            <person name="DeShazer D."/>
            <person name="Woods D."/>
            <person name="Fedorova N."/>
            <person name="Kim H.S."/>
            <person name="Shabalina S.A."/>
            <person name="Pearson T.R."/>
            <person name="Brinkac L."/>
            <person name="Tan P."/>
            <person name="Nandi T."/>
            <person name="Crabtree J."/>
            <person name="Badger J."/>
            <person name="Beckstrom-Sternberg S."/>
            <person name="Saqib M."/>
            <person name="Schutzer S.E."/>
            <person name="Keim P."/>
            <person name="Nierman W.C."/>
        </authorList>
    </citation>
    <scope>NUCLEOTIDE SEQUENCE [LARGE SCALE GENOMIC DNA]</scope>
    <source>
        <strain>SAVP1</strain>
    </source>
</reference>
<evidence type="ECO:0000255" key="1">
    <source>
        <dbReference type="HAMAP-Rule" id="MF_00387"/>
    </source>
</evidence>
<protein>
    <recommendedName>
        <fullName evidence="1">Acyl-[acyl-carrier-protein]--UDP-N-acetylglucosamine O-acyltransferase</fullName>
        <shortName evidence="1">UDP-N-acetylglucosamine acyltransferase</shortName>
        <ecNumber evidence="1">2.3.1.129</ecNumber>
    </recommendedName>
</protein>
<feature type="chain" id="PRO_1000013154" description="Acyl-[acyl-carrier-protein]--UDP-N-acetylglucosamine O-acyltransferase">
    <location>
        <begin position="1"/>
        <end position="262"/>
    </location>
</feature>
<accession>A1V556</accession>
<organism>
    <name type="scientific">Burkholderia mallei (strain SAVP1)</name>
    <dbReference type="NCBI Taxonomy" id="320388"/>
    <lineage>
        <taxon>Bacteria</taxon>
        <taxon>Pseudomonadati</taxon>
        <taxon>Pseudomonadota</taxon>
        <taxon>Betaproteobacteria</taxon>
        <taxon>Burkholderiales</taxon>
        <taxon>Burkholderiaceae</taxon>
        <taxon>Burkholderia</taxon>
        <taxon>pseudomallei group</taxon>
    </lineage>
</organism>
<sequence>MSRIHPTAIIEPGAQLHETVEVGPYAIVGSHVTIGARTTIGSHSVIEGHTTIGEDNRIGHYASVGGRPQDMKYKDEPTRLVIGDRNTIREFTTIHTGTVQDTGVTTLGDDNWIMAYVHIGHDCRVGSHVILSSNAQMAGHVEIGDWAIVGGMSGVHQFVRIGAHSMLGGASALVQDIPPFVIAAGNKAEPHGINVEGLRRRGFSPDAISALRSAYRILYKNSLSLEEAKVQLSELAQAGGDGDAAVKSLVDFVESSQRGIIR</sequence>
<keyword id="KW-0012">Acyltransferase</keyword>
<keyword id="KW-0963">Cytoplasm</keyword>
<keyword id="KW-0441">Lipid A biosynthesis</keyword>
<keyword id="KW-0444">Lipid biosynthesis</keyword>
<keyword id="KW-0443">Lipid metabolism</keyword>
<keyword id="KW-0677">Repeat</keyword>
<keyword id="KW-0808">Transferase</keyword>
<name>LPXA_BURMS</name>